<protein>
    <recommendedName>
        <fullName evidence="1">Small ribosomal subunit protein uS9</fullName>
    </recommendedName>
    <alternativeName>
        <fullName evidence="3">30S ribosomal protein S9</fullName>
    </alternativeName>
</protein>
<sequence length="130" mass="14619">MAEQRFYATGKRKTSIARVWLKPGEGNITVNRRTLDEYFGRETSKMVIRQPLELTDNMGKFDIMVNVCGGGPSGQAGAIKHGITKALLEADPELRGVLKKAGFITRDSRAKERKKYGRKGARARFQFSKR</sequence>
<organism>
    <name type="scientific">Syntrophotalea carbinolica (strain DSM 2380 / NBRC 103641 / GraBd1)</name>
    <name type="common">Pelobacter carbinolicus</name>
    <dbReference type="NCBI Taxonomy" id="338963"/>
    <lineage>
        <taxon>Bacteria</taxon>
        <taxon>Pseudomonadati</taxon>
        <taxon>Thermodesulfobacteriota</taxon>
        <taxon>Desulfuromonadia</taxon>
        <taxon>Desulfuromonadales</taxon>
        <taxon>Syntrophotaleaceae</taxon>
        <taxon>Syntrophotalea</taxon>
    </lineage>
</organism>
<proteinExistence type="inferred from homology"/>
<comment type="similarity">
    <text evidence="1">Belongs to the universal ribosomal protein uS9 family.</text>
</comment>
<accession>Q3A3B7</accession>
<keyword id="KW-1185">Reference proteome</keyword>
<keyword id="KW-0687">Ribonucleoprotein</keyword>
<keyword id="KW-0689">Ribosomal protein</keyword>
<name>RS9_SYNC1</name>
<evidence type="ECO:0000255" key="1">
    <source>
        <dbReference type="HAMAP-Rule" id="MF_00532"/>
    </source>
</evidence>
<evidence type="ECO:0000256" key="2">
    <source>
        <dbReference type="SAM" id="MobiDB-lite"/>
    </source>
</evidence>
<evidence type="ECO:0000305" key="3"/>
<gene>
    <name evidence="1" type="primary">rpsI</name>
    <name type="ordered locus">Pcar_1899</name>
</gene>
<dbReference type="EMBL" id="CP000142">
    <property type="protein sequence ID" value="ABA89140.1"/>
    <property type="molecule type" value="Genomic_DNA"/>
</dbReference>
<dbReference type="RefSeq" id="WP_011341644.1">
    <property type="nucleotide sequence ID" value="NC_007498.2"/>
</dbReference>
<dbReference type="SMR" id="Q3A3B7"/>
<dbReference type="STRING" id="338963.Pcar_1899"/>
<dbReference type="KEGG" id="pca:Pcar_1899"/>
<dbReference type="eggNOG" id="COG0103">
    <property type="taxonomic scope" value="Bacteria"/>
</dbReference>
<dbReference type="HOGENOM" id="CLU_046483_2_1_7"/>
<dbReference type="OrthoDB" id="9803965at2"/>
<dbReference type="Proteomes" id="UP000002534">
    <property type="component" value="Chromosome"/>
</dbReference>
<dbReference type="GO" id="GO:0022627">
    <property type="term" value="C:cytosolic small ribosomal subunit"/>
    <property type="evidence" value="ECO:0007669"/>
    <property type="project" value="TreeGrafter"/>
</dbReference>
<dbReference type="GO" id="GO:0003723">
    <property type="term" value="F:RNA binding"/>
    <property type="evidence" value="ECO:0007669"/>
    <property type="project" value="TreeGrafter"/>
</dbReference>
<dbReference type="GO" id="GO:0003735">
    <property type="term" value="F:structural constituent of ribosome"/>
    <property type="evidence" value="ECO:0007669"/>
    <property type="project" value="InterPro"/>
</dbReference>
<dbReference type="GO" id="GO:0006412">
    <property type="term" value="P:translation"/>
    <property type="evidence" value="ECO:0007669"/>
    <property type="project" value="UniProtKB-UniRule"/>
</dbReference>
<dbReference type="FunFam" id="3.30.230.10:FF:000001">
    <property type="entry name" value="30S ribosomal protein S9"/>
    <property type="match status" value="1"/>
</dbReference>
<dbReference type="Gene3D" id="3.30.230.10">
    <property type="match status" value="1"/>
</dbReference>
<dbReference type="HAMAP" id="MF_00532_B">
    <property type="entry name" value="Ribosomal_uS9_B"/>
    <property type="match status" value="1"/>
</dbReference>
<dbReference type="InterPro" id="IPR020568">
    <property type="entry name" value="Ribosomal_Su5_D2-typ_SF"/>
</dbReference>
<dbReference type="InterPro" id="IPR000754">
    <property type="entry name" value="Ribosomal_uS9"/>
</dbReference>
<dbReference type="InterPro" id="IPR023035">
    <property type="entry name" value="Ribosomal_uS9_bac/plastid"/>
</dbReference>
<dbReference type="InterPro" id="IPR020574">
    <property type="entry name" value="Ribosomal_uS9_CS"/>
</dbReference>
<dbReference type="InterPro" id="IPR014721">
    <property type="entry name" value="Ribsml_uS5_D2-typ_fold_subgr"/>
</dbReference>
<dbReference type="NCBIfam" id="NF001099">
    <property type="entry name" value="PRK00132.1"/>
    <property type="match status" value="1"/>
</dbReference>
<dbReference type="PANTHER" id="PTHR21569">
    <property type="entry name" value="RIBOSOMAL PROTEIN S9"/>
    <property type="match status" value="1"/>
</dbReference>
<dbReference type="PANTHER" id="PTHR21569:SF1">
    <property type="entry name" value="SMALL RIBOSOMAL SUBUNIT PROTEIN US9M"/>
    <property type="match status" value="1"/>
</dbReference>
<dbReference type="Pfam" id="PF00380">
    <property type="entry name" value="Ribosomal_S9"/>
    <property type="match status" value="1"/>
</dbReference>
<dbReference type="SUPFAM" id="SSF54211">
    <property type="entry name" value="Ribosomal protein S5 domain 2-like"/>
    <property type="match status" value="1"/>
</dbReference>
<dbReference type="PROSITE" id="PS00360">
    <property type="entry name" value="RIBOSOMAL_S9"/>
    <property type="match status" value="1"/>
</dbReference>
<feature type="chain" id="PRO_1000051278" description="Small ribosomal subunit protein uS9">
    <location>
        <begin position="1"/>
        <end position="130"/>
    </location>
</feature>
<feature type="region of interest" description="Disordered" evidence="2">
    <location>
        <begin position="110"/>
        <end position="130"/>
    </location>
</feature>
<feature type="compositionally biased region" description="Basic residues" evidence="2">
    <location>
        <begin position="111"/>
        <end position="130"/>
    </location>
</feature>
<reference key="1">
    <citation type="submission" date="2005-10" db="EMBL/GenBank/DDBJ databases">
        <title>Complete sequence of Pelobacter carbinolicus DSM 2380.</title>
        <authorList>
            <person name="Copeland A."/>
            <person name="Lucas S."/>
            <person name="Lapidus A."/>
            <person name="Barry K."/>
            <person name="Detter J.C."/>
            <person name="Glavina T."/>
            <person name="Hammon N."/>
            <person name="Israni S."/>
            <person name="Pitluck S."/>
            <person name="Chertkov O."/>
            <person name="Schmutz J."/>
            <person name="Larimer F."/>
            <person name="Land M."/>
            <person name="Kyrpides N."/>
            <person name="Ivanova N."/>
            <person name="Richardson P."/>
        </authorList>
    </citation>
    <scope>NUCLEOTIDE SEQUENCE [LARGE SCALE GENOMIC DNA]</scope>
    <source>
        <strain>DSM 2380 / NBRC 103641 / GraBd1</strain>
    </source>
</reference>